<comment type="alternative products">
    <event type="alternative splicing"/>
    <isoform>
        <id>F4J394-1</id>
        <name>1</name>
        <sequence type="displayed"/>
    </isoform>
    <text>A number of isoforms are produced. According to EST sequences.</text>
</comment>
<comment type="similarity">
    <text evidence="4">Belongs to the TRAFAC class myosin-kinesin ATPase superfamily. Kinesin family. KIN-7 subfamily.</text>
</comment>
<comment type="sequence caution" evidence="5">
    <conflict type="frameshift">
        <sequence resource="EMBL-CDS" id="BAF00728"/>
    </conflict>
</comment>
<comment type="sequence caution" evidence="5">
    <conflict type="erroneous gene model prediction">
        <sequence resource="EMBL-CDS" id="CAB62637"/>
    </conflict>
</comment>
<gene>
    <name evidence="5" type="primary">KIN7G</name>
    <name evidence="6" type="ordered locus">At3g51150</name>
    <name evidence="7" type="ORF">F24M12.190</name>
</gene>
<keyword id="KW-0025">Alternative splicing</keyword>
<keyword id="KW-0067">ATP-binding</keyword>
<keyword id="KW-0175">Coiled coil</keyword>
<keyword id="KW-0493">Microtubule</keyword>
<keyword id="KW-0505">Motor protein</keyword>
<keyword id="KW-0547">Nucleotide-binding</keyword>
<keyword id="KW-1185">Reference proteome</keyword>
<evidence type="ECO:0000255" key="1"/>
<evidence type="ECO:0000255" key="2">
    <source>
        <dbReference type="PROSITE-ProRule" id="PRU00283"/>
    </source>
</evidence>
<evidence type="ECO:0000256" key="3">
    <source>
        <dbReference type="SAM" id="MobiDB-lite"/>
    </source>
</evidence>
<evidence type="ECO:0000303" key="4">
    <source>
    </source>
</evidence>
<evidence type="ECO:0000305" key="5"/>
<evidence type="ECO:0000312" key="6">
    <source>
        <dbReference type="Araport" id="AT3G51150"/>
    </source>
</evidence>
<evidence type="ECO:0000312" key="7">
    <source>
        <dbReference type="EMBL" id="CAB62637.1"/>
    </source>
</evidence>
<reference key="1">
    <citation type="journal article" date="2000" name="Nature">
        <title>Sequence and analysis of chromosome 3 of the plant Arabidopsis thaliana.</title>
        <authorList>
            <person name="Salanoubat M."/>
            <person name="Lemcke K."/>
            <person name="Rieger M."/>
            <person name="Ansorge W."/>
            <person name="Unseld M."/>
            <person name="Fartmann B."/>
            <person name="Valle G."/>
            <person name="Bloecker H."/>
            <person name="Perez-Alonso M."/>
            <person name="Obermaier B."/>
            <person name="Delseny M."/>
            <person name="Boutry M."/>
            <person name="Grivell L.A."/>
            <person name="Mache R."/>
            <person name="Puigdomenech P."/>
            <person name="De Simone V."/>
            <person name="Choisne N."/>
            <person name="Artiguenave F."/>
            <person name="Robert C."/>
            <person name="Brottier P."/>
            <person name="Wincker P."/>
            <person name="Cattolico L."/>
            <person name="Weissenbach J."/>
            <person name="Saurin W."/>
            <person name="Quetier F."/>
            <person name="Schaefer M."/>
            <person name="Mueller-Auer S."/>
            <person name="Gabel C."/>
            <person name="Fuchs M."/>
            <person name="Benes V."/>
            <person name="Wurmbach E."/>
            <person name="Drzonek H."/>
            <person name="Erfle H."/>
            <person name="Jordan N."/>
            <person name="Bangert S."/>
            <person name="Wiedelmann R."/>
            <person name="Kranz H."/>
            <person name="Voss H."/>
            <person name="Holland R."/>
            <person name="Brandt P."/>
            <person name="Nyakatura G."/>
            <person name="Vezzi A."/>
            <person name="D'Angelo M."/>
            <person name="Pallavicini A."/>
            <person name="Toppo S."/>
            <person name="Simionati B."/>
            <person name="Conrad A."/>
            <person name="Hornischer K."/>
            <person name="Kauer G."/>
            <person name="Loehnert T.-H."/>
            <person name="Nordsiek G."/>
            <person name="Reichelt J."/>
            <person name="Scharfe M."/>
            <person name="Schoen O."/>
            <person name="Bargues M."/>
            <person name="Terol J."/>
            <person name="Climent J."/>
            <person name="Navarro P."/>
            <person name="Collado C."/>
            <person name="Perez-Perez A."/>
            <person name="Ottenwaelder B."/>
            <person name="Duchemin D."/>
            <person name="Cooke R."/>
            <person name="Laudie M."/>
            <person name="Berger-Llauro C."/>
            <person name="Purnelle B."/>
            <person name="Masuy D."/>
            <person name="de Haan M."/>
            <person name="Maarse A.C."/>
            <person name="Alcaraz J.-P."/>
            <person name="Cottet A."/>
            <person name="Casacuberta E."/>
            <person name="Monfort A."/>
            <person name="Argiriou A."/>
            <person name="Flores M."/>
            <person name="Liguori R."/>
            <person name="Vitale D."/>
            <person name="Mannhaupt G."/>
            <person name="Haase D."/>
            <person name="Schoof H."/>
            <person name="Rudd S."/>
            <person name="Zaccaria P."/>
            <person name="Mewes H.-W."/>
            <person name="Mayer K.F.X."/>
            <person name="Kaul S."/>
            <person name="Town C.D."/>
            <person name="Koo H.L."/>
            <person name="Tallon L.J."/>
            <person name="Jenkins J."/>
            <person name="Rooney T."/>
            <person name="Rizzo M."/>
            <person name="Walts A."/>
            <person name="Utterback T."/>
            <person name="Fujii C.Y."/>
            <person name="Shea T.P."/>
            <person name="Creasy T.H."/>
            <person name="Haas B."/>
            <person name="Maiti R."/>
            <person name="Wu D."/>
            <person name="Peterson J."/>
            <person name="Van Aken S."/>
            <person name="Pai G."/>
            <person name="Militscher J."/>
            <person name="Sellers P."/>
            <person name="Gill J.E."/>
            <person name="Feldblyum T.V."/>
            <person name="Preuss D."/>
            <person name="Lin X."/>
            <person name="Nierman W.C."/>
            <person name="Salzberg S.L."/>
            <person name="White O."/>
            <person name="Venter J.C."/>
            <person name="Fraser C.M."/>
            <person name="Kaneko T."/>
            <person name="Nakamura Y."/>
            <person name="Sato S."/>
            <person name="Kato T."/>
            <person name="Asamizu E."/>
            <person name="Sasamoto S."/>
            <person name="Kimura T."/>
            <person name="Idesawa K."/>
            <person name="Kawashima K."/>
            <person name="Kishida Y."/>
            <person name="Kiyokawa C."/>
            <person name="Kohara M."/>
            <person name="Matsumoto M."/>
            <person name="Matsuno A."/>
            <person name="Muraki A."/>
            <person name="Nakayama S."/>
            <person name="Nakazaki N."/>
            <person name="Shinpo S."/>
            <person name="Takeuchi C."/>
            <person name="Wada T."/>
            <person name="Watanabe A."/>
            <person name="Yamada M."/>
            <person name="Yasuda M."/>
            <person name="Tabata S."/>
        </authorList>
    </citation>
    <scope>NUCLEOTIDE SEQUENCE [LARGE SCALE GENOMIC DNA]</scope>
    <source>
        <strain>cv. Columbia</strain>
    </source>
</reference>
<reference key="2">
    <citation type="journal article" date="2017" name="Plant J.">
        <title>Araport11: a complete reannotation of the Arabidopsis thaliana reference genome.</title>
        <authorList>
            <person name="Cheng C.Y."/>
            <person name="Krishnakumar V."/>
            <person name="Chan A.P."/>
            <person name="Thibaud-Nissen F."/>
            <person name="Schobel S."/>
            <person name="Town C.D."/>
        </authorList>
    </citation>
    <scope>GENOME REANNOTATION</scope>
    <source>
        <strain>cv. Columbia</strain>
    </source>
</reference>
<reference key="3">
    <citation type="submission" date="2006-07" db="EMBL/GenBank/DDBJ databases">
        <title>Large-scale analysis of RIKEN Arabidopsis full-length (RAFL) cDNAs.</title>
        <authorList>
            <person name="Totoki Y."/>
            <person name="Seki M."/>
            <person name="Ishida J."/>
            <person name="Nakajima M."/>
            <person name="Enju A."/>
            <person name="Kamiya A."/>
            <person name="Narusaka M."/>
            <person name="Shin-i T."/>
            <person name="Nakagawa M."/>
            <person name="Sakamoto N."/>
            <person name="Oishi K."/>
            <person name="Kohara Y."/>
            <person name="Kobayashi M."/>
            <person name="Toyoda A."/>
            <person name="Sakaki Y."/>
            <person name="Sakurai T."/>
            <person name="Iida K."/>
            <person name="Akiyama K."/>
            <person name="Satou M."/>
            <person name="Toyoda T."/>
            <person name="Konagaya A."/>
            <person name="Carninci P."/>
            <person name="Kawai J."/>
            <person name="Hayashizaki Y."/>
            <person name="Shinozaki K."/>
        </authorList>
    </citation>
    <scope>NUCLEOTIDE SEQUENCE [LARGE SCALE MRNA]</scope>
    <source>
        <strain>cv. Columbia</strain>
    </source>
</reference>
<reference key="4">
    <citation type="journal article" date="2001" name="BMC Genomics">
        <title>Kinesins in the Arabidopsis genome: a comparative analysis among eukaryotes.</title>
        <authorList>
            <person name="Reddy A.S."/>
            <person name="Day I.S."/>
        </authorList>
    </citation>
    <scope>GENE FAMILY</scope>
</reference>
<reference key="5">
    <citation type="journal article" date="2006" name="BMC Genomics">
        <title>Comprehensive comparative analysis of kinesins in photosynthetic eukaryotes.</title>
        <authorList>
            <person name="Richardson D.N."/>
            <person name="Simmons M.P."/>
            <person name="Reddy A.S."/>
        </authorList>
    </citation>
    <scope>GENE FAMILY</scope>
    <scope>NOMENCLATURE</scope>
</reference>
<reference key="6">
    <citation type="journal article" date="2012" name="Protoplasma">
        <title>Functions of the Arabidopsis kinesin superfamily of microtubule-based motor proteins.</title>
        <authorList>
            <person name="Zhu C."/>
            <person name="Dixit R."/>
        </authorList>
    </citation>
    <scope>REVIEW</scope>
</reference>
<sequence>MGIGEDQMQGSSGREEKIFVSVRLRPLNVRERARNDVADWECINDETVIYRSHLSISERSMYPTAYTFDRVFGPECSTREVYDQGAKEVALSVVSGVHASVFAYGQTSSGKTYTMIGITDYALADIYDYIEKHNEREFILKFSAMEIYNESVRDLLSTDISPLRVLDDPEKGTVVEKLTEETLRDWNHFKELLSICIAQRQIGETALNEVSSRSHQILRLTVESTAREYLAKDKFSTLTATVNFIDLAGSERASQSLSAGTRLKEGGHINRSLLTLGTVIRKLSKGKNGHIPFRDSKLTRILQTSLGGNARTSIICTLSPARVHVEQSRNTLLFASCAKEVTTNAQVNVVMSDKALVRHLQRELAKLESELSSPRQALVVSDTTALLKEKDLQIEKLNKEVFQLAQELERAYSRIEDLQQIIGEAPQQEILSTDSEQTNTNVVLGRQYPKLRVRSSWESLNITPESPLSAQASIMISPQSTEHGSDENVFQLSDLRLNSGASSPAQHLAFVTPGKFTKVRLNIRGVESKNQLHIHKGESVDQSRVQGERLHEMDEPSEVDSEDTCTELQCIETESPGIIMYPEPNILPDRCKAVSALPLCEPESKNSRPPTETAEEKEEKEETEEKEEEEEERVKEVSSVSIQTKEKSGPIKVSPRCVLSLTDESFPDESSNLKRDPTHQDFVTPSPEKLYAWHLESNGQTAGGTGFTRSRSCGASFVSSSSFSLSERDANTPPCWYQNERAESNLKPSNSKRPPLPKHISRMSMPATWFEKDFNHTQRMPAGLDGVNMIKSSPNGSQVSTSKSHVYARQTSGRALISQDEGEETVPQRDKRIIHLSMEEIEQKFLALRSSKSFKDAAVDPIQDYLTMPLNWPLEFKRLEMEIIELWHACNVSLSHRSYFFLLFRGDQKDCLYMEVELRRLKYIRETFTHNNKAIENGRTLTSMSSLRALNRERYKLSQLMQKKLTKEERENVFLRWGIGLNTKHRRLQLAHRLWSESKDMDHVRESASVVGKLMGFVDMDLASKEMFGLNFSLRPRAKKSSLWKRSVLSLSIL</sequence>
<protein>
    <recommendedName>
        <fullName evidence="5">Kinesin-like protein KIN-7G</fullName>
    </recommendedName>
</protein>
<accession>F4J394</accession>
<accession>A0A1I9LN45</accession>
<accession>Q0WQ71</accession>
<accession>Q9SD31</accession>
<proteinExistence type="evidence at transcript level"/>
<feature type="chain" id="PRO_0000436465" description="Kinesin-like protein KIN-7G">
    <location>
        <begin position="1"/>
        <end position="1054"/>
    </location>
</feature>
<feature type="domain" description="Kinesin motor" evidence="2">
    <location>
        <begin position="17"/>
        <end position="341"/>
    </location>
</feature>
<feature type="region of interest" description="Disordered" evidence="3">
    <location>
        <begin position="600"/>
        <end position="648"/>
    </location>
</feature>
<feature type="region of interest" description="Disordered" evidence="3">
    <location>
        <begin position="740"/>
        <end position="760"/>
    </location>
</feature>
<feature type="coiled-coil region" evidence="1">
    <location>
        <begin position="350"/>
        <end position="425"/>
    </location>
</feature>
<feature type="coiled-coil region" evidence="1">
    <location>
        <begin position="611"/>
        <end position="640"/>
    </location>
</feature>
<feature type="compositionally biased region" description="Acidic residues" evidence="3">
    <location>
        <begin position="613"/>
        <end position="631"/>
    </location>
</feature>
<feature type="binding site" evidence="2">
    <location>
        <begin position="105"/>
        <end position="112"/>
    </location>
    <ligand>
        <name>ATP</name>
        <dbReference type="ChEBI" id="CHEBI:30616"/>
    </ligand>
</feature>
<name>KN7G_ARATH</name>
<dbReference type="EMBL" id="AL132980">
    <property type="protein sequence ID" value="CAB62637.1"/>
    <property type="status" value="ALT_SEQ"/>
    <property type="molecule type" value="Genomic_DNA"/>
</dbReference>
<dbReference type="EMBL" id="CP002686">
    <property type="protein sequence ID" value="AEE78757.1"/>
    <property type="molecule type" value="Genomic_DNA"/>
</dbReference>
<dbReference type="EMBL" id="CP002686">
    <property type="protein sequence ID" value="ANM64002.1"/>
    <property type="molecule type" value="Genomic_DNA"/>
</dbReference>
<dbReference type="EMBL" id="CP002686">
    <property type="protein sequence ID" value="ANM64003.1"/>
    <property type="molecule type" value="Genomic_DNA"/>
</dbReference>
<dbReference type="EMBL" id="AK228832">
    <property type="protein sequence ID" value="BAF00728.1"/>
    <property type="status" value="ALT_FRAME"/>
    <property type="molecule type" value="mRNA"/>
</dbReference>
<dbReference type="PIR" id="T45746">
    <property type="entry name" value="T45746"/>
</dbReference>
<dbReference type="RefSeq" id="NP_001190049.1">
    <molecule id="F4J394-1"/>
    <property type="nucleotide sequence ID" value="NM_001203120.2"/>
</dbReference>
<dbReference type="RefSeq" id="NP_001326055.1">
    <molecule id="F4J394-1"/>
    <property type="nucleotide sequence ID" value="NM_001339492.1"/>
</dbReference>
<dbReference type="RefSeq" id="NP_001326056.1">
    <molecule id="F4J394-1"/>
    <property type="nucleotide sequence ID" value="NM_001339493.1"/>
</dbReference>
<dbReference type="SMR" id="F4J394"/>
<dbReference type="FunCoup" id="F4J394">
    <property type="interactions" value="94"/>
</dbReference>
<dbReference type="STRING" id="3702.F4J394"/>
<dbReference type="GlyGen" id="F4J394">
    <property type="glycosylation" value="1 site"/>
</dbReference>
<dbReference type="iPTMnet" id="F4J394"/>
<dbReference type="PaxDb" id="3702-AT3G51150.2"/>
<dbReference type="EnsemblPlants" id="AT3G51150.2">
    <molecule id="F4J394-1"/>
    <property type="protein sequence ID" value="AT3G51150.2"/>
    <property type="gene ID" value="AT3G51150"/>
</dbReference>
<dbReference type="EnsemblPlants" id="AT3G51150.3">
    <molecule id="F4J394-1"/>
    <property type="protein sequence ID" value="AT3G51150.3"/>
    <property type="gene ID" value="AT3G51150"/>
</dbReference>
<dbReference type="EnsemblPlants" id="AT3G51150.4">
    <molecule id="F4J394-1"/>
    <property type="protein sequence ID" value="AT3G51150.4"/>
    <property type="gene ID" value="AT3G51150"/>
</dbReference>
<dbReference type="GeneID" id="824279"/>
<dbReference type="Gramene" id="AT3G51150.2">
    <molecule id="F4J394-1"/>
    <property type="protein sequence ID" value="AT3G51150.2"/>
    <property type="gene ID" value="AT3G51150"/>
</dbReference>
<dbReference type="Gramene" id="AT3G51150.3">
    <molecule id="F4J394-1"/>
    <property type="protein sequence ID" value="AT3G51150.3"/>
    <property type="gene ID" value="AT3G51150"/>
</dbReference>
<dbReference type="Gramene" id="AT3G51150.4">
    <molecule id="F4J394-1"/>
    <property type="protein sequence ID" value="AT3G51150.4"/>
    <property type="gene ID" value="AT3G51150"/>
</dbReference>
<dbReference type="KEGG" id="ath:AT3G51150"/>
<dbReference type="Araport" id="AT3G51150"/>
<dbReference type="TAIR" id="AT3G51150"/>
<dbReference type="eggNOG" id="KOG0242">
    <property type="taxonomic scope" value="Eukaryota"/>
</dbReference>
<dbReference type="InParanoid" id="F4J394"/>
<dbReference type="PRO" id="PR:F4J394"/>
<dbReference type="Proteomes" id="UP000006548">
    <property type="component" value="Chromosome 3"/>
</dbReference>
<dbReference type="ExpressionAtlas" id="F4J394">
    <property type="expression patterns" value="baseline and differential"/>
</dbReference>
<dbReference type="GO" id="GO:0005874">
    <property type="term" value="C:microtubule"/>
    <property type="evidence" value="ECO:0007669"/>
    <property type="project" value="UniProtKB-KW"/>
</dbReference>
<dbReference type="GO" id="GO:0005524">
    <property type="term" value="F:ATP binding"/>
    <property type="evidence" value="ECO:0007669"/>
    <property type="project" value="UniProtKB-KW"/>
</dbReference>
<dbReference type="GO" id="GO:0008017">
    <property type="term" value="F:microtubule binding"/>
    <property type="evidence" value="ECO:0007669"/>
    <property type="project" value="InterPro"/>
</dbReference>
<dbReference type="GO" id="GO:0003777">
    <property type="term" value="F:microtubule motor activity"/>
    <property type="evidence" value="ECO:0007669"/>
    <property type="project" value="InterPro"/>
</dbReference>
<dbReference type="GO" id="GO:0007018">
    <property type="term" value="P:microtubule-based movement"/>
    <property type="evidence" value="ECO:0007669"/>
    <property type="project" value="InterPro"/>
</dbReference>
<dbReference type="CDD" id="cd01374">
    <property type="entry name" value="KISc_CENP_E"/>
    <property type="match status" value="1"/>
</dbReference>
<dbReference type="FunFam" id="3.40.850.10:FF:000016">
    <property type="entry name" value="Kinesin-like protein"/>
    <property type="match status" value="1"/>
</dbReference>
<dbReference type="Gene3D" id="3.40.850.10">
    <property type="entry name" value="Kinesin motor domain"/>
    <property type="match status" value="1"/>
</dbReference>
<dbReference type="InterPro" id="IPR027640">
    <property type="entry name" value="Kinesin-like_fam"/>
</dbReference>
<dbReference type="InterPro" id="IPR019821">
    <property type="entry name" value="Kinesin_motor_CS"/>
</dbReference>
<dbReference type="InterPro" id="IPR001752">
    <property type="entry name" value="Kinesin_motor_dom"/>
</dbReference>
<dbReference type="InterPro" id="IPR036961">
    <property type="entry name" value="Kinesin_motor_dom_sf"/>
</dbReference>
<dbReference type="InterPro" id="IPR021881">
    <property type="entry name" value="NACK_C"/>
</dbReference>
<dbReference type="InterPro" id="IPR027417">
    <property type="entry name" value="P-loop_NTPase"/>
</dbReference>
<dbReference type="PANTHER" id="PTHR47968">
    <property type="entry name" value="CENTROMERE PROTEIN E"/>
    <property type="match status" value="1"/>
</dbReference>
<dbReference type="PANTHER" id="PTHR47968:SF3">
    <property type="entry name" value="KINESIN-LIKE PROTEIN KIN-7G"/>
    <property type="match status" value="1"/>
</dbReference>
<dbReference type="Pfam" id="PF11995">
    <property type="entry name" value="DUF3490"/>
    <property type="match status" value="1"/>
</dbReference>
<dbReference type="Pfam" id="PF00225">
    <property type="entry name" value="Kinesin"/>
    <property type="match status" value="1"/>
</dbReference>
<dbReference type="PRINTS" id="PR00380">
    <property type="entry name" value="KINESINHEAVY"/>
</dbReference>
<dbReference type="SMART" id="SM00129">
    <property type="entry name" value="KISc"/>
    <property type="match status" value="1"/>
</dbReference>
<dbReference type="SUPFAM" id="SSF52540">
    <property type="entry name" value="P-loop containing nucleoside triphosphate hydrolases"/>
    <property type="match status" value="1"/>
</dbReference>
<dbReference type="PROSITE" id="PS00411">
    <property type="entry name" value="KINESIN_MOTOR_1"/>
    <property type="match status" value="1"/>
</dbReference>
<dbReference type="PROSITE" id="PS50067">
    <property type="entry name" value="KINESIN_MOTOR_2"/>
    <property type="match status" value="1"/>
</dbReference>
<organism>
    <name type="scientific">Arabidopsis thaliana</name>
    <name type="common">Mouse-ear cress</name>
    <dbReference type="NCBI Taxonomy" id="3702"/>
    <lineage>
        <taxon>Eukaryota</taxon>
        <taxon>Viridiplantae</taxon>
        <taxon>Streptophyta</taxon>
        <taxon>Embryophyta</taxon>
        <taxon>Tracheophyta</taxon>
        <taxon>Spermatophyta</taxon>
        <taxon>Magnoliopsida</taxon>
        <taxon>eudicotyledons</taxon>
        <taxon>Gunneridae</taxon>
        <taxon>Pentapetalae</taxon>
        <taxon>rosids</taxon>
        <taxon>malvids</taxon>
        <taxon>Brassicales</taxon>
        <taxon>Brassicaceae</taxon>
        <taxon>Camelineae</taxon>
        <taxon>Arabidopsis</taxon>
    </lineage>
</organism>